<keyword id="KW-0489">Methyltransferase</keyword>
<keyword id="KW-1185">Reference proteome</keyword>
<keyword id="KW-0949">S-adenosyl-L-methionine</keyword>
<keyword id="KW-0808">Transferase</keyword>
<keyword id="KW-0819">tRNA processing</keyword>
<name>TRMB_PSEPK</name>
<dbReference type="EC" id="2.1.1.33" evidence="2"/>
<dbReference type="EMBL" id="AE015451">
    <property type="protein sequence ID" value="AAN70668.1"/>
    <property type="molecule type" value="Genomic_DNA"/>
</dbReference>
<dbReference type="RefSeq" id="NP_747204.1">
    <property type="nucleotide sequence ID" value="NC_002947.4"/>
</dbReference>
<dbReference type="RefSeq" id="WP_004575478.1">
    <property type="nucleotide sequence ID" value="NZ_CP169744.1"/>
</dbReference>
<dbReference type="SMR" id="Q88CS7"/>
<dbReference type="STRING" id="160488.PP_5103"/>
<dbReference type="PaxDb" id="160488-PP_5103"/>
<dbReference type="GeneID" id="83682838"/>
<dbReference type="KEGG" id="ppu:PP_5103"/>
<dbReference type="PATRIC" id="fig|160488.4.peg.5446"/>
<dbReference type="eggNOG" id="COG0220">
    <property type="taxonomic scope" value="Bacteria"/>
</dbReference>
<dbReference type="HOGENOM" id="CLU_050910_0_1_6"/>
<dbReference type="OrthoDB" id="9802090at2"/>
<dbReference type="PhylomeDB" id="Q88CS7"/>
<dbReference type="BioCyc" id="PPUT160488:G1G01-5447-MONOMER"/>
<dbReference type="UniPathway" id="UPA00989"/>
<dbReference type="Proteomes" id="UP000000556">
    <property type="component" value="Chromosome"/>
</dbReference>
<dbReference type="GO" id="GO:0043527">
    <property type="term" value="C:tRNA methyltransferase complex"/>
    <property type="evidence" value="ECO:0007669"/>
    <property type="project" value="TreeGrafter"/>
</dbReference>
<dbReference type="GO" id="GO:0008176">
    <property type="term" value="F:tRNA (guanine(46)-N7)-methyltransferase activity"/>
    <property type="evidence" value="ECO:0007669"/>
    <property type="project" value="UniProtKB-UniRule"/>
</dbReference>
<dbReference type="CDD" id="cd02440">
    <property type="entry name" value="AdoMet_MTases"/>
    <property type="match status" value="1"/>
</dbReference>
<dbReference type="FunFam" id="3.40.50.150:FF:000035">
    <property type="entry name" value="tRNA (guanine-N(7)-)-methyltransferase"/>
    <property type="match status" value="1"/>
</dbReference>
<dbReference type="Gene3D" id="3.40.50.150">
    <property type="entry name" value="Vaccinia Virus protein VP39"/>
    <property type="match status" value="1"/>
</dbReference>
<dbReference type="HAMAP" id="MF_01057">
    <property type="entry name" value="tRNA_methyltr_TrmB"/>
    <property type="match status" value="1"/>
</dbReference>
<dbReference type="InterPro" id="IPR029063">
    <property type="entry name" value="SAM-dependent_MTases_sf"/>
</dbReference>
<dbReference type="InterPro" id="IPR003358">
    <property type="entry name" value="tRNA_(Gua-N-7)_MeTrfase_Trmb"/>
</dbReference>
<dbReference type="InterPro" id="IPR055361">
    <property type="entry name" value="tRNA_methyltr_TrmB_bact"/>
</dbReference>
<dbReference type="NCBIfam" id="TIGR00091">
    <property type="entry name" value="tRNA (guanosine(46)-N7)-methyltransferase TrmB"/>
    <property type="match status" value="1"/>
</dbReference>
<dbReference type="PANTHER" id="PTHR23417">
    <property type="entry name" value="3-DEOXY-D-MANNO-OCTULOSONIC-ACID TRANSFERASE/TRNA GUANINE-N 7 - -METHYLTRANSFERASE"/>
    <property type="match status" value="1"/>
</dbReference>
<dbReference type="PANTHER" id="PTHR23417:SF14">
    <property type="entry name" value="PENTACOTRIPEPTIDE-REPEAT REGION OF PRORP DOMAIN-CONTAINING PROTEIN"/>
    <property type="match status" value="1"/>
</dbReference>
<dbReference type="Pfam" id="PF02390">
    <property type="entry name" value="Methyltransf_4"/>
    <property type="match status" value="1"/>
</dbReference>
<dbReference type="SUPFAM" id="SSF53335">
    <property type="entry name" value="S-adenosyl-L-methionine-dependent methyltransferases"/>
    <property type="match status" value="1"/>
</dbReference>
<dbReference type="PROSITE" id="PS51625">
    <property type="entry name" value="SAM_MT_TRMB"/>
    <property type="match status" value="1"/>
</dbReference>
<reference key="1">
    <citation type="journal article" date="2002" name="Environ. Microbiol.">
        <title>Complete genome sequence and comparative analysis of the metabolically versatile Pseudomonas putida KT2440.</title>
        <authorList>
            <person name="Nelson K.E."/>
            <person name="Weinel C."/>
            <person name="Paulsen I.T."/>
            <person name="Dodson R.J."/>
            <person name="Hilbert H."/>
            <person name="Martins dos Santos V.A.P."/>
            <person name="Fouts D.E."/>
            <person name="Gill S.R."/>
            <person name="Pop M."/>
            <person name="Holmes M."/>
            <person name="Brinkac L.M."/>
            <person name="Beanan M.J."/>
            <person name="DeBoy R.T."/>
            <person name="Daugherty S.C."/>
            <person name="Kolonay J.F."/>
            <person name="Madupu R."/>
            <person name="Nelson W.C."/>
            <person name="White O."/>
            <person name="Peterson J.D."/>
            <person name="Khouri H.M."/>
            <person name="Hance I."/>
            <person name="Chris Lee P."/>
            <person name="Holtzapple E.K."/>
            <person name="Scanlan D."/>
            <person name="Tran K."/>
            <person name="Moazzez A."/>
            <person name="Utterback T.R."/>
            <person name="Rizzo M."/>
            <person name="Lee K."/>
            <person name="Kosack D."/>
            <person name="Moestl D."/>
            <person name="Wedler H."/>
            <person name="Lauber J."/>
            <person name="Stjepandic D."/>
            <person name="Hoheisel J."/>
            <person name="Straetz M."/>
            <person name="Heim S."/>
            <person name="Kiewitz C."/>
            <person name="Eisen J.A."/>
            <person name="Timmis K.N."/>
            <person name="Duesterhoeft A."/>
            <person name="Tuemmler B."/>
            <person name="Fraser C.M."/>
        </authorList>
    </citation>
    <scope>NUCLEOTIDE SEQUENCE [LARGE SCALE GENOMIC DNA]</scope>
    <source>
        <strain>ATCC 47054 / DSM 6125 / CFBP 8728 / NCIMB 11950 / KT2440</strain>
    </source>
</reference>
<sequence>MTESHDTPITPDGEARPHRRIKSFVMRAGRMTEGQQRGLDQGGPLYILPLADSPVDYDQVFGRSAPRTLEIGFGMGHSLLEMAAAAPEQDFIGVEVHRPGVGALLNGVLTQGLKNLRVYDCDAIEVLNRCVADNSLDRLMLFFPDPWHKARHHKRRIVQLEFAELVRRKLKPGGVFHMATDWEPYAEYMLEVMSAAPGYRNRAADGTYVPRPEERPITKFERRGERLGHGVWDLKFEKVD</sequence>
<evidence type="ECO:0000250" key="1"/>
<evidence type="ECO:0000255" key="2">
    <source>
        <dbReference type="HAMAP-Rule" id="MF_01057"/>
    </source>
</evidence>
<evidence type="ECO:0000256" key="3">
    <source>
        <dbReference type="SAM" id="MobiDB-lite"/>
    </source>
</evidence>
<gene>
    <name evidence="2" type="primary">trmB</name>
    <name type="ordered locus">PP_5103</name>
</gene>
<feature type="chain" id="PRO_0000171377" description="tRNA (guanine-N(7)-)-methyltransferase">
    <location>
        <begin position="1"/>
        <end position="240"/>
    </location>
</feature>
<feature type="region of interest" description="Disordered" evidence="3">
    <location>
        <begin position="1"/>
        <end position="20"/>
    </location>
</feature>
<feature type="active site" evidence="1">
    <location>
        <position position="145"/>
    </location>
</feature>
<feature type="binding site" evidence="2">
    <location>
        <position position="70"/>
    </location>
    <ligand>
        <name>S-adenosyl-L-methionine</name>
        <dbReference type="ChEBI" id="CHEBI:59789"/>
    </ligand>
</feature>
<feature type="binding site" evidence="2">
    <location>
        <position position="95"/>
    </location>
    <ligand>
        <name>S-adenosyl-L-methionine</name>
        <dbReference type="ChEBI" id="CHEBI:59789"/>
    </ligand>
</feature>
<feature type="binding site" evidence="2">
    <location>
        <position position="122"/>
    </location>
    <ligand>
        <name>S-adenosyl-L-methionine</name>
        <dbReference type="ChEBI" id="CHEBI:59789"/>
    </ligand>
</feature>
<feature type="binding site" evidence="2">
    <location>
        <position position="145"/>
    </location>
    <ligand>
        <name>S-adenosyl-L-methionine</name>
        <dbReference type="ChEBI" id="CHEBI:59789"/>
    </ligand>
</feature>
<feature type="binding site" evidence="2">
    <location>
        <position position="149"/>
    </location>
    <ligand>
        <name>substrate</name>
    </ligand>
</feature>
<feature type="binding site" evidence="2">
    <location>
        <position position="181"/>
    </location>
    <ligand>
        <name>substrate</name>
    </ligand>
</feature>
<feature type="binding site" evidence="2">
    <location>
        <begin position="218"/>
        <end position="221"/>
    </location>
    <ligand>
        <name>substrate</name>
    </ligand>
</feature>
<comment type="function">
    <text evidence="2">Catalyzes the formation of N(7)-methylguanine at position 46 (m7G46) in tRNA.</text>
</comment>
<comment type="catalytic activity">
    <reaction evidence="2">
        <text>guanosine(46) in tRNA + S-adenosyl-L-methionine = N(7)-methylguanosine(46) in tRNA + S-adenosyl-L-homocysteine</text>
        <dbReference type="Rhea" id="RHEA:42708"/>
        <dbReference type="Rhea" id="RHEA-COMP:10188"/>
        <dbReference type="Rhea" id="RHEA-COMP:10189"/>
        <dbReference type="ChEBI" id="CHEBI:57856"/>
        <dbReference type="ChEBI" id="CHEBI:59789"/>
        <dbReference type="ChEBI" id="CHEBI:74269"/>
        <dbReference type="ChEBI" id="CHEBI:74480"/>
        <dbReference type="EC" id="2.1.1.33"/>
    </reaction>
</comment>
<comment type="pathway">
    <text evidence="2">tRNA modification; N(7)-methylguanine-tRNA biosynthesis.</text>
</comment>
<comment type="similarity">
    <text evidence="2">Belongs to the class I-like SAM-binding methyltransferase superfamily. TrmB family.</text>
</comment>
<protein>
    <recommendedName>
        <fullName evidence="2">tRNA (guanine-N(7)-)-methyltransferase</fullName>
        <ecNumber evidence="2">2.1.1.33</ecNumber>
    </recommendedName>
    <alternativeName>
        <fullName evidence="2">tRNA (guanine(46)-N(7))-methyltransferase</fullName>
    </alternativeName>
    <alternativeName>
        <fullName evidence="2">tRNA(m7G46)-methyltransferase</fullName>
    </alternativeName>
</protein>
<proteinExistence type="inferred from homology"/>
<organism>
    <name type="scientific">Pseudomonas putida (strain ATCC 47054 / DSM 6125 / CFBP 8728 / NCIMB 11950 / KT2440)</name>
    <dbReference type="NCBI Taxonomy" id="160488"/>
    <lineage>
        <taxon>Bacteria</taxon>
        <taxon>Pseudomonadati</taxon>
        <taxon>Pseudomonadota</taxon>
        <taxon>Gammaproteobacteria</taxon>
        <taxon>Pseudomonadales</taxon>
        <taxon>Pseudomonadaceae</taxon>
        <taxon>Pseudomonas</taxon>
    </lineage>
</organism>
<accession>Q88CS7</accession>